<dbReference type="EC" id="4.2.3.1"/>
<dbReference type="EMBL" id="X91046">
    <property type="protein sequence ID" value="CAA62506.1"/>
    <property type="molecule type" value="Genomic_DNA"/>
</dbReference>
<dbReference type="EMBL" id="AE016814">
    <property type="protein sequence ID" value="AAS50424.1"/>
    <property type="molecule type" value="Genomic_DNA"/>
</dbReference>
<dbReference type="PIR" id="S61905">
    <property type="entry name" value="S61905"/>
</dbReference>
<dbReference type="RefSeq" id="NP_982600.1">
    <property type="nucleotide sequence ID" value="NM_207953.1"/>
</dbReference>
<dbReference type="SMR" id="Q00063"/>
<dbReference type="FunCoup" id="Q00063">
    <property type="interactions" value="270"/>
</dbReference>
<dbReference type="STRING" id="284811.Q00063"/>
<dbReference type="EnsemblFungi" id="AAS50424">
    <property type="protein sequence ID" value="AAS50424"/>
    <property type="gene ID" value="AGOS_AAR059C"/>
</dbReference>
<dbReference type="GeneID" id="4618427"/>
<dbReference type="KEGG" id="ago:AGOS_AAR059C"/>
<dbReference type="eggNOG" id="KOG2616">
    <property type="taxonomic scope" value="Eukaryota"/>
</dbReference>
<dbReference type="HOGENOM" id="CLU_015170_1_0_1"/>
<dbReference type="InParanoid" id="Q00063"/>
<dbReference type="OMA" id="NFERYLY"/>
<dbReference type="OrthoDB" id="5203861at2759"/>
<dbReference type="UniPathway" id="UPA00050">
    <property type="reaction ID" value="UER00065"/>
</dbReference>
<dbReference type="Proteomes" id="UP000000591">
    <property type="component" value="Chromosome I"/>
</dbReference>
<dbReference type="GO" id="GO:0030170">
    <property type="term" value="F:pyridoxal phosphate binding"/>
    <property type="evidence" value="ECO:0000250"/>
    <property type="project" value="UniProtKB"/>
</dbReference>
<dbReference type="GO" id="GO:0004795">
    <property type="term" value="F:threonine synthase activity"/>
    <property type="evidence" value="ECO:0000318"/>
    <property type="project" value="GO_Central"/>
</dbReference>
<dbReference type="GO" id="GO:0009088">
    <property type="term" value="P:threonine biosynthetic process"/>
    <property type="evidence" value="ECO:0000318"/>
    <property type="project" value="GO_Central"/>
</dbReference>
<dbReference type="CDD" id="cd01560">
    <property type="entry name" value="Thr-synth_2"/>
    <property type="match status" value="1"/>
</dbReference>
<dbReference type="FunFam" id="3.40.50.1100:FF:000046">
    <property type="entry name" value="THR4p Threonine synthase"/>
    <property type="match status" value="1"/>
</dbReference>
<dbReference type="FunFam" id="3.90.1380.10:FF:000003">
    <property type="entry name" value="THR4p Threonine synthase"/>
    <property type="match status" value="1"/>
</dbReference>
<dbReference type="Gene3D" id="3.40.50.1100">
    <property type="match status" value="2"/>
</dbReference>
<dbReference type="Gene3D" id="3.90.1380.10">
    <property type="entry name" value="Threonine synthase, N-terminal domain"/>
    <property type="match status" value="1"/>
</dbReference>
<dbReference type="InterPro" id="IPR000634">
    <property type="entry name" value="Ser/Thr_deHydtase_PyrdxlP-BS"/>
</dbReference>
<dbReference type="InterPro" id="IPR029144">
    <property type="entry name" value="Thr_synth_N"/>
</dbReference>
<dbReference type="InterPro" id="IPR037158">
    <property type="entry name" value="Thr_synth_N_sf"/>
</dbReference>
<dbReference type="InterPro" id="IPR004450">
    <property type="entry name" value="Thr_synthase-like"/>
</dbReference>
<dbReference type="InterPro" id="IPR051166">
    <property type="entry name" value="Threonine_Synthase"/>
</dbReference>
<dbReference type="InterPro" id="IPR001926">
    <property type="entry name" value="TrpB-like_PALP"/>
</dbReference>
<dbReference type="InterPro" id="IPR036052">
    <property type="entry name" value="TrpB-like_PALP_sf"/>
</dbReference>
<dbReference type="NCBIfam" id="TIGR00260">
    <property type="entry name" value="thrC"/>
    <property type="match status" value="1"/>
</dbReference>
<dbReference type="PANTHER" id="PTHR42690">
    <property type="entry name" value="THREONINE SYNTHASE FAMILY MEMBER"/>
    <property type="match status" value="1"/>
</dbReference>
<dbReference type="PANTHER" id="PTHR42690:SF1">
    <property type="entry name" value="THREONINE SYNTHASE-LIKE 2"/>
    <property type="match status" value="1"/>
</dbReference>
<dbReference type="Pfam" id="PF00291">
    <property type="entry name" value="PALP"/>
    <property type="match status" value="1"/>
</dbReference>
<dbReference type="Pfam" id="PF24857">
    <property type="entry name" value="THR4_C"/>
    <property type="match status" value="1"/>
</dbReference>
<dbReference type="Pfam" id="PF14821">
    <property type="entry name" value="Thr_synth_N"/>
    <property type="match status" value="1"/>
</dbReference>
<dbReference type="SUPFAM" id="SSF53686">
    <property type="entry name" value="Tryptophan synthase beta subunit-like PLP-dependent enzymes"/>
    <property type="match status" value="1"/>
</dbReference>
<dbReference type="PROSITE" id="PS00165">
    <property type="entry name" value="DEHYDRATASE_SER_THR"/>
    <property type="match status" value="1"/>
</dbReference>
<organism>
    <name type="scientific">Eremothecium gossypii (strain ATCC 10895 / CBS 109.51 / FGSC 9923 / NRRL Y-1056)</name>
    <name type="common">Yeast</name>
    <name type="synonym">Ashbya gossypii</name>
    <dbReference type="NCBI Taxonomy" id="284811"/>
    <lineage>
        <taxon>Eukaryota</taxon>
        <taxon>Fungi</taxon>
        <taxon>Dikarya</taxon>
        <taxon>Ascomycota</taxon>
        <taxon>Saccharomycotina</taxon>
        <taxon>Saccharomycetes</taxon>
        <taxon>Saccharomycetales</taxon>
        <taxon>Saccharomycetaceae</taxon>
        <taxon>Eremothecium</taxon>
    </lineage>
</organism>
<proteinExistence type="inferred from homology"/>
<sequence>MSQVYRSTRSSSEDTKSFEEAVIQGLAEDGGLFLPAVIPRLREETLFEHWAHLSFQDLAMEIMKFYIADWEIPAPELRELIERSYSSFRSEEVTPLRKNVTGDDENLHILELFHGPTYAFKDVALQFVGNLFEYFLERKNRDVSEEERTHLTVVGATSGDTGSAAIYGLRGKQDVSVFILYPHGRISPIQEEQMTTVEDENVHTMAIEGSFDNCQDIVKSIFVDEEFNRKHNIAAVNSINWARILAQITYYFYSYFRATDGQPGRVKFIVPSGNFGDILAGFYAKQMGLPIEKLVIATNENDILDRFLREGVYERSEDVTATHSPAMDILVSSNFERLLWFFAREQLAQGDDQEAGSIVNRWFEQLREERRFDVPEHLLDAIRYHFDSERVDNYNTLASIRHIYEHAQNPERYVIDPHTAVGICAANRQIAHDQNNEIHYISLATAHPAKFADAVNEALSSYDDYNFDDVLPDRLRRLGDLEKRIKYVDNTDVDVIKSIIEEELINMGIYNP</sequence>
<reference key="1">
    <citation type="journal article" date="1996" name="Mol. Gen. Genet.">
        <title>AgTHR4, a new selection marker for transformation of the filamentous fungus Ashbya gossypii, maps in a four-gene cluster that is conserved between A. gossypii and Saccharomyces cerevisiae.</title>
        <authorList>
            <person name="Altmann-Joehl R."/>
            <person name="Philippsen P."/>
        </authorList>
    </citation>
    <scope>NUCLEOTIDE SEQUENCE [GENOMIC DNA]</scope>
    <source>
        <strain>ATCC 10895 / CBS 109.51 / FGSC 9923 / NRRL Y-1056</strain>
    </source>
</reference>
<reference key="2">
    <citation type="journal article" date="2004" name="Science">
        <title>The Ashbya gossypii genome as a tool for mapping the ancient Saccharomyces cerevisiae genome.</title>
        <authorList>
            <person name="Dietrich F.S."/>
            <person name="Voegeli S."/>
            <person name="Brachat S."/>
            <person name="Lerch A."/>
            <person name="Gates K."/>
            <person name="Steiner S."/>
            <person name="Mohr C."/>
            <person name="Poehlmann R."/>
            <person name="Luedi P."/>
            <person name="Choi S."/>
            <person name="Wing R.A."/>
            <person name="Flavier A."/>
            <person name="Gaffney T.D."/>
            <person name="Philippsen P."/>
        </authorList>
    </citation>
    <scope>NUCLEOTIDE SEQUENCE [LARGE SCALE GENOMIC DNA]</scope>
    <source>
        <strain>ATCC 10895 / CBS 109.51 / FGSC 9923 / NRRL Y-1056</strain>
    </source>
</reference>
<reference key="3">
    <citation type="journal article" date="2013" name="G3 (Bethesda)">
        <title>Genomes of Ashbya fungi isolated from insects reveal four mating-type loci, numerous translocations, lack of transposons, and distinct gene duplications.</title>
        <authorList>
            <person name="Dietrich F.S."/>
            <person name="Voegeli S."/>
            <person name="Kuo S."/>
            <person name="Philippsen P."/>
        </authorList>
    </citation>
    <scope>GENOME REANNOTATION</scope>
    <source>
        <strain>ATCC 10895 / CBS 109.51 / FGSC 9923 / NRRL Y-1056</strain>
    </source>
</reference>
<name>THRC_EREGS</name>
<evidence type="ECO:0000250" key="1">
    <source>
        <dbReference type="UniProtKB" id="P16120"/>
    </source>
</evidence>
<evidence type="ECO:0000305" key="2"/>
<gene>
    <name type="primary">THR4</name>
    <name type="ordered locus">AAR059C</name>
</gene>
<feature type="chain" id="PRO_0000185643" description="Threonine synthase">
    <location>
        <begin position="1"/>
        <end position="512"/>
    </location>
</feature>
<feature type="binding site" evidence="1">
    <location>
        <position position="273"/>
    </location>
    <ligand>
        <name>pyridoxal 5'-phosphate</name>
        <dbReference type="ChEBI" id="CHEBI:597326"/>
    </ligand>
</feature>
<feature type="binding site" evidence="1">
    <location>
        <position position="274"/>
    </location>
    <ligand>
        <name>pyridoxal 5'-phosphate</name>
        <dbReference type="ChEBI" id="CHEBI:597326"/>
    </ligand>
</feature>
<feature type="binding site" evidence="1">
    <location>
        <position position="275"/>
    </location>
    <ligand>
        <name>pyridoxal 5'-phosphate</name>
        <dbReference type="ChEBI" id="CHEBI:597326"/>
    </ligand>
</feature>
<feature type="binding site" evidence="1">
    <location>
        <position position="277"/>
    </location>
    <ligand>
        <name>pyridoxal 5'-phosphate</name>
        <dbReference type="ChEBI" id="CHEBI:597326"/>
    </ligand>
</feature>
<feature type="binding site" evidence="1">
    <location>
        <position position="445"/>
    </location>
    <ligand>
        <name>pyridoxal 5'-phosphate</name>
        <dbReference type="ChEBI" id="CHEBI:597326"/>
    </ligand>
</feature>
<feature type="modified residue" description="N6-(pyridoxal phosphate)lysine" evidence="1">
    <location>
        <position position="121"/>
    </location>
</feature>
<keyword id="KW-0028">Amino-acid biosynthesis</keyword>
<keyword id="KW-0456">Lyase</keyword>
<keyword id="KW-0663">Pyridoxal phosphate</keyword>
<keyword id="KW-1185">Reference proteome</keyword>
<keyword id="KW-0791">Threonine biosynthesis</keyword>
<accession>Q00063</accession>
<protein>
    <recommendedName>
        <fullName>Threonine synthase</fullName>
        <shortName>TS</shortName>
        <ecNumber>4.2.3.1</ecNumber>
    </recommendedName>
</protein>
<comment type="function">
    <text evidence="1">Catalyzes the gamma-elimination of phosphate from L-phosphohomoserine and the beta-addition of water to produce L-threonine.</text>
</comment>
<comment type="catalytic activity">
    <reaction evidence="1">
        <text>O-phospho-L-homoserine + H2O = L-threonine + phosphate</text>
        <dbReference type="Rhea" id="RHEA:10840"/>
        <dbReference type="ChEBI" id="CHEBI:15377"/>
        <dbReference type="ChEBI" id="CHEBI:43474"/>
        <dbReference type="ChEBI" id="CHEBI:57590"/>
        <dbReference type="ChEBI" id="CHEBI:57926"/>
        <dbReference type="EC" id="4.2.3.1"/>
    </reaction>
    <physiologicalReaction direction="left-to-right" evidence="1">
        <dbReference type="Rhea" id="RHEA:10841"/>
    </physiologicalReaction>
</comment>
<comment type="cofactor">
    <cofactor evidence="1">
        <name>pyridoxal 5'-phosphate</name>
        <dbReference type="ChEBI" id="CHEBI:597326"/>
    </cofactor>
</comment>
<comment type="pathway">
    <text evidence="1">Amino-acid biosynthesis; L-threonine biosynthesis; L-threonine from L-aspartate: step 5/5.</text>
</comment>
<comment type="similarity">
    <text evidence="2">Belongs to the threonine synthase family.</text>
</comment>